<comment type="function">
    <text evidence="1">Catalyzes the hydrolysis of N-succinyl-L,L-diaminopimelic acid (SDAP), forming succinate and LL-2,6-diaminopimelate (DAP), an intermediate involved in the bacterial biosynthesis of lysine and meso-diaminopimelic acid, an essential component of bacterial cell walls.</text>
</comment>
<comment type="catalytic activity">
    <reaction evidence="1">
        <text>N-succinyl-(2S,6S)-2,6-diaminopimelate + H2O = (2S,6S)-2,6-diaminopimelate + succinate</text>
        <dbReference type="Rhea" id="RHEA:22608"/>
        <dbReference type="ChEBI" id="CHEBI:15377"/>
        <dbReference type="ChEBI" id="CHEBI:30031"/>
        <dbReference type="ChEBI" id="CHEBI:57609"/>
        <dbReference type="ChEBI" id="CHEBI:58087"/>
        <dbReference type="EC" id="3.5.1.18"/>
    </reaction>
</comment>
<comment type="cofactor">
    <cofactor evidence="1">
        <name>Zn(2+)</name>
        <dbReference type="ChEBI" id="CHEBI:29105"/>
    </cofactor>
    <cofactor evidence="1">
        <name>Co(2+)</name>
        <dbReference type="ChEBI" id="CHEBI:48828"/>
    </cofactor>
    <text evidence="1">Binds 2 Zn(2+) or Co(2+) ions per subunit.</text>
</comment>
<comment type="pathway">
    <text evidence="1">Amino-acid biosynthesis; L-lysine biosynthesis via DAP pathway; LL-2,6-diaminopimelate from (S)-tetrahydrodipicolinate (succinylase route): step 3/3.</text>
</comment>
<comment type="subunit">
    <text evidence="1">Homodimer.</text>
</comment>
<comment type="similarity">
    <text evidence="1">Belongs to the peptidase M20A family. DapE subfamily.</text>
</comment>
<protein>
    <recommendedName>
        <fullName evidence="1">Succinyl-diaminopimelate desuccinylase</fullName>
        <shortName evidence="1">SDAP desuccinylase</shortName>
        <ecNumber evidence="1">3.5.1.18</ecNumber>
    </recommendedName>
    <alternativeName>
        <fullName evidence="1">N-succinyl-LL-2,6-diaminoheptanedioate amidohydrolase</fullName>
    </alternativeName>
</protein>
<proteinExistence type="inferred from homology"/>
<organism>
    <name type="scientific">Nitrosococcus oceani (strain ATCC 19707 / BCRC 17464 / JCM 30415 / NCIMB 11848 / C-107)</name>
    <dbReference type="NCBI Taxonomy" id="323261"/>
    <lineage>
        <taxon>Bacteria</taxon>
        <taxon>Pseudomonadati</taxon>
        <taxon>Pseudomonadota</taxon>
        <taxon>Gammaproteobacteria</taxon>
        <taxon>Chromatiales</taxon>
        <taxon>Chromatiaceae</taxon>
        <taxon>Nitrosococcus</taxon>
    </lineage>
</organism>
<evidence type="ECO:0000255" key="1">
    <source>
        <dbReference type="HAMAP-Rule" id="MF_01690"/>
    </source>
</evidence>
<dbReference type="EC" id="3.5.1.18" evidence="1"/>
<dbReference type="EMBL" id="CP000127">
    <property type="protein sequence ID" value="ABA58586.1"/>
    <property type="molecule type" value="Genomic_DNA"/>
</dbReference>
<dbReference type="RefSeq" id="WP_002810525.1">
    <property type="nucleotide sequence ID" value="NC_007484.1"/>
</dbReference>
<dbReference type="SMR" id="Q3J9B0"/>
<dbReference type="FunCoup" id="Q3J9B0">
    <property type="interactions" value="415"/>
</dbReference>
<dbReference type="STRING" id="323261.Noc_2126"/>
<dbReference type="KEGG" id="noc:Noc_2126"/>
<dbReference type="eggNOG" id="COG0624">
    <property type="taxonomic scope" value="Bacteria"/>
</dbReference>
<dbReference type="HOGENOM" id="CLU_021802_4_0_6"/>
<dbReference type="InParanoid" id="Q3J9B0"/>
<dbReference type="UniPathway" id="UPA00034">
    <property type="reaction ID" value="UER00021"/>
</dbReference>
<dbReference type="Proteomes" id="UP000006838">
    <property type="component" value="Chromosome"/>
</dbReference>
<dbReference type="GO" id="GO:0008777">
    <property type="term" value="F:acetylornithine deacetylase activity"/>
    <property type="evidence" value="ECO:0007669"/>
    <property type="project" value="TreeGrafter"/>
</dbReference>
<dbReference type="GO" id="GO:0050897">
    <property type="term" value="F:cobalt ion binding"/>
    <property type="evidence" value="ECO:0007669"/>
    <property type="project" value="UniProtKB-UniRule"/>
</dbReference>
<dbReference type="GO" id="GO:0009014">
    <property type="term" value="F:succinyl-diaminopimelate desuccinylase activity"/>
    <property type="evidence" value="ECO:0007669"/>
    <property type="project" value="UniProtKB-UniRule"/>
</dbReference>
<dbReference type="GO" id="GO:0008270">
    <property type="term" value="F:zinc ion binding"/>
    <property type="evidence" value="ECO:0007669"/>
    <property type="project" value="UniProtKB-UniRule"/>
</dbReference>
<dbReference type="GO" id="GO:0019877">
    <property type="term" value="P:diaminopimelate biosynthetic process"/>
    <property type="evidence" value="ECO:0007669"/>
    <property type="project" value="UniProtKB-UniRule"/>
</dbReference>
<dbReference type="GO" id="GO:0006526">
    <property type="term" value="P:L-arginine biosynthetic process"/>
    <property type="evidence" value="ECO:0007669"/>
    <property type="project" value="TreeGrafter"/>
</dbReference>
<dbReference type="GO" id="GO:0009089">
    <property type="term" value="P:lysine biosynthetic process via diaminopimelate"/>
    <property type="evidence" value="ECO:0007669"/>
    <property type="project" value="UniProtKB-UniRule"/>
</dbReference>
<dbReference type="CDD" id="cd03891">
    <property type="entry name" value="M20_DapE_proteobac"/>
    <property type="match status" value="1"/>
</dbReference>
<dbReference type="FunFam" id="3.30.70.360:FF:000011">
    <property type="entry name" value="Succinyl-diaminopimelate desuccinylase"/>
    <property type="match status" value="1"/>
</dbReference>
<dbReference type="FunFam" id="3.40.630.10:FF:000005">
    <property type="entry name" value="Succinyl-diaminopimelate desuccinylase"/>
    <property type="match status" value="1"/>
</dbReference>
<dbReference type="Gene3D" id="3.40.630.10">
    <property type="entry name" value="Zn peptidases"/>
    <property type="match status" value="2"/>
</dbReference>
<dbReference type="HAMAP" id="MF_01690">
    <property type="entry name" value="DapE"/>
    <property type="match status" value="1"/>
</dbReference>
<dbReference type="InterPro" id="IPR001261">
    <property type="entry name" value="ArgE/DapE_CS"/>
</dbReference>
<dbReference type="InterPro" id="IPR036264">
    <property type="entry name" value="Bact_exopeptidase_dim_dom"/>
</dbReference>
<dbReference type="InterPro" id="IPR005941">
    <property type="entry name" value="DapE_proteobac"/>
</dbReference>
<dbReference type="InterPro" id="IPR002933">
    <property type="entry name" value="Peptidase_M20"/>
</dbReference>
<dbReference type="InterPro" id="IPR011650">
    <property type="entry name" value="Peptidase_M20_dimer"/>
</dbReference>
<dbReference type="InterPro" id="IPR050072">
    <property type="entry name" value="Peptidase_M20A"/>
</dbReference>
<dbReference type="NCBIfam" id="TIGR01246">
    <property type="entry name" value="dapE_proteo"/>
    <property type="match status" value="1"/>
</dbReference>
<dbReference type="NCBIfam" id="NF009557">
    <property type="entry name" value="PRK13009.1"/>
    <property type="match status" value="1"/>
</dbReference>
<dbReference type="PANTHER" id="PTHR43808">
    <property type="entry name" value="ACETYLORNITHINE DEACETYLASE"/>
    <property type="match status" value="1"/>
</dbReference>
<dbReference type="PANTHER" id="PTHR43808:SF31">
    <property type="entry name" value="N-ACETYL-L-CITRULLINE DEACETYLASE"/>
    <property type="match status" value="1"/>
</dbReference>
<dbReference type="Pfam" id="PF07687">
    <property type="entry name" value="M20_dimer"/>
    <property type="match status" value="1"/>
</dbReference>
<dbReference type="Pfam" id="PF01546">
    <property type="entry name" value="Peptidase_M20"/>
    <property type="match status" value="1"/>
</dbReference>
<dbReference type="SUPFAM" id="SSF55031">
    <property type="entry name" value="Bacterial exopeptidase dimerisation domain"/>
    <property type="match status" value="1"/>
</dbReference>
<dbReference type="SUPFAM" id="SSF53187">
    <property type="entry name" value="Zn-dependent exopeptidases"/>
    <property type="match status" value="1"/>
</dbReference>
<dbReference type="PROSITE" id="PS00759">
    <property type="entry name" value="ARGE_DAPE_CPG2_2"/>
    <property type="match status" value="1"/>
</dbReference>
<keyword id="KW-0028">Amino-acid biosynthesis</keyword>
<keyword id="KW-0170">Cobalt</keyword>
<keyword id="KW-0220">Diaminopimelate biosynthesis</keyword>
<keyword id="KW-0378">Hydrolase</keyword>
<keyword id="KW-0457">Lysine biosynthesis</keyword>
<keyword id="KW-0479">Metal-binding</keyword>
<keyword id="KW-1185">Reference proteome</keyword>
<keyword id="KW-0862">Zinc</keyword>
<accession>Q3J9B0</accession>
<gene>
    <name evidence="1" type="primary">dapE</name>
    <name type="ordered locus">Noc_2126</name>
</gene>
<name>DAPE_NITOC</name>
<sequence length="376" mass="40567">MSATLELAKRLIACASITPRDAGCQGLLAQRLLALGFQGEQMNFGEVDNIWLRRGQKPPLFVFAGHTDVVPPGPPDKWLTDPFTPEVRNGLLYGRGAADMKGSLAAMVTACEHFINVHSDHAGSIAFLLTSDEEGPAINGTIKVVETLQARGEKIDYCLVGEPTSQKQVGDMIKNGRRGSLGGRLIVRGIQGHVAYPHLADNPIHSLAPALAVLCAQTWDQGNKDFPPTTFQISNIQGGTGATNVIPGEVEILFNFRYSTEVTHQQLQQQMEEILSQQRLNYELEWTLSGKPFLTAPGSLMTAVSQAVRGITGIDAEFSTTGGTSDGRFIAPTGAQVVELGPVNATIHKVNECVAVADLEILSRIYSRILEILLTE</sequence>
<reference key="1">
    <citation type="journal article" date="2006" name="Appl. Environ. Microbiol.">
        <title>Complete genome sequence of the marine, chemolithoautotrophic, ammonia-oxidizing bacterium Nitrosococcus oceani ATCC 19707.</title>
        <authorList>
            <person name="Klotz M.G."/>
            <person name="Arp D.J."/>
            <person name="Chain P.S.G."/>
            <person name="El-Sheikh A.F."/>
            <person name="Hauser L.J."/>
            <person name="Hommes N.G."/>
            <person name="Larimer F.W."/>
            <person name="Malfatti S.A."/>
            <person name="Norton J.M."/>
            <person name="Poret-Peterson A.T."/>
            <person name="Vergez L.M."/>
            <person name="Ward B.B."/>
        </authorList>
    </citation>
    <scope>NUCLEOTIDE SEQUENCE [LARGE SCALE GENOMIC DNA]</scope>
    <source>
        <strain>ATCC 19707 / BCRC 17464 / JCM 30415 / NCIMB 11848 / C-107</strain>
    </source>
</reference>
<feature type="chain" id="PRO_0000375630" description="Succinyl-diaminopimelate desuccinylase">
    <location>
        <begin position="1"/>
        <end position="376"/>
    </location>
</feature>
<feature type="active site" evidence="1">
    <location>
        <position position="68"/>
    </location>
</feature>
<feature type="active site" description="Proton acceptor" evidence="1">
    <location>
        <position position="133"/>
    </location>
</feature>
<feature type="binding site" evidence="1">
    <location>
        <position position="66"/>
    </location>
    <ligand>
        <name>Zn(2+)</name>
        <dbReference type="ChEBI" id="CHEBI:29105"/>
        <label>1</label>
    </ligand>
</feature>
<feature type="binding site" evidence="1">
    <location>
        <position position="99"/>
    </location>
    <ligand>
        <name>Zn(2+)</name>
        <dbReference type="ChEBI" id="CHEBI:29105"/>
        <label>1</label>
    </ligand>
</feature>
<feature type="binding site" evidence="1">
    <location>
        <position position="99"/>
    </location>
    <ligand>
        <name>Zn(2+)</name>
        <dbReference type="ChEBI" id="CHEBI:29105"/>
        <label>2</label>
    </ligand>
</feature>
<feature type="binding site" evidence="1">
    <location>
        <position position="134"/>
    </location>
    <ligand>
        <name>Zn(2+)</name>
        <dbReference type="ChEBI" id="CHEBI:29105"/>
        <label>2</label>
    </ligand>
</feature>
<feature type="binding site" evidence="1">
    <location>
        <position position="162"/>
    </location>
    <ligand>
        <name>Zn(2+)</name>
        <dbReference type="ChEBI" id="CHEBI:29105"/>
        <label>1</label>
    </ligand>
</feature>
<feature type="binding site" evidence="1">
    <location>
        <position position="348"/>
    </location>
    <ligand>
        <name>Zn(2+)</name>
        <dbReference type="ChEBI" id="CHEBI:29105"/>
        <label>2</label>
    </ligand>
</feature>